<evidence type="ECO:0000255" key="1">
    <source>
        <dbReference type="PROSITE-ProRule" id="PRU10023"/>
    </source>
</evidence>
<evidence type="ECO:0000305" key="2"/>
<reference key="1">
    <citation type="journal article" date="1986" name="Mol. Gen. Genet.">
        <title>Structure of the chalcone synthase gene of Antirrhinum majus.</title>
        <authorList>
            <person name="Sommer H."/>
            <person name="Saedler H."/>
        </authorList>
    </citation>
    <scope>NUCLEOTIDE SEQUENCE [GENOMIC DNA]</scope>
</reference>
<keyword id="KW-0012">Acyltransferase</keyword>
<keyword id="KW-0284">Flavonoid biosynthesis</keyword>
<keyword id="KW-0808">Transferase</keyword>
<accession>P06515</accession>
<protein>
    <recommendedName>
        <fullName>Chalcone synthase</fullName>
        <ecNumber>2.3.1.74</ecNumber>
    </recommendedName>
    <alternativeName>
        <fullName>Naringenin-chalcone synthase</fullName>
    </alternativeName>
</protein>
<gene>
    <name type="primary">CHS</name>
</gene>
<feature type="chain" id="PRO_0000215952" description="Chalcone synthase">
    <location>
        <begin position="1"/>
        <end position="390"/>
    </location>
</feature>
<feature type="active site" evidence="1">
    <location>
        <position position="164"/>
    </location>
</feature>
<proteinExistence type="inferred from homology"/>
<comment type="function">
    <text>The primary product of this enzyme is 4,2',4',6'-tetrahydroxychalcone (also termed naringenin-chalcone or chalcone) which can under specific conditions spontaneously isomerize into naringenin.</text>
</comment>
<comment type="catalytic activity">
    <reaction evidence="1">
        <text>(E)-4-coumaroyl-CoA + 3 malonyl-CoA + 3 H(+) = 2',4,4',6'-tetrahydroxychalcone + 3 CO2 + 4 CoA</text>
        <dbReference type="Rhea" id="RHEA:11128"/>
        <dbReference type="ChEBI" id="CHEBI:15378"/>
        <dbReference type="ChEBI" id="CHEBI:15413"/>
        <dbReference type="ChEBI" id="CHEBI:16526"/>
        <dbReference type="ChEBI" id="CHEBI:57287"/>
        <dbReference type="ChEBI" id="CHEBI:57384"/>
        <dbReference type="ChEBI" id="CHEBI:85008"/>
        <dbReference type="EC" id="2.3.1.74"/>
    </reaction>
</comment>
<comment type="pathway">
    <text>Secondary metabolite biosynthesis; flavonoid biosynthesis.</text>
</comment>
<comment type="similarity">
    <text evidence="2">Belongs to the thiolase-like superfamily. Chalcone/stilbene synthases family.</text>
</comment>
<organism>
    <name type="scientific">Antirrhinum majus</name>
    <name type="common">Garden snapdragon</name>
    <dbReference type="NCBI Taxonomy" id="4151"/>
    <lineage>
        <taxon>Eukaryota</taxon>
        <taxon>Viridiplantae</taxon>
        <taxon>Streptophyta</taxon>
        <taxon>Embryophyta</taxon>
        <taxon>Tracheophyta</taxon>
        <taxon>Spermatophyta</taxon>
        <taxon>Magnoliopsida</taxon>
        <taxon>eudicotyledons</taxon>
        <taxon>Gunneridae</taxon>
        <taxon>Pentapetalae</taxon>
        <taxon>asterids</taxon>
        <taxon>lamiids</taxon>
        <taxon>Lamiales</taxon>
        <taxon>Plantaginaceae</taxon>
        <taxon>Antirrhineae</taxon>
        <taxon>Antirrhinum</taxon>
    </lineage>
</organism>
<dbReference type="EC" id="2.3.1.74"/>
<dbReference type="EMBL" id="X03710">
    <property type="protein sequence ID" value="CAA27338.1"/>
    <property type="molecule type" value="Genomic_DNA"/>
</dbReference>
<dbReference type="PIR" id="S07312">
    <property type="entry name" value="SYSKCD"/>
</dbReference>
<dbReference type="SMR" id="P06515"/>
<dbReference type="UniPathway" id="UPA00154"/>
<dbReference type="GO" id="GO:0016210">
    <property type="term" value="F:naringenin-chalcone synthase activity"/>
    <property type="evidence" value="ECO:0007669"/>
    <property type="project" value="UniProtKB-EC"/>
</dbReference>
<dbReference type="GO" id="GO:0009813">
    <property type="term" value="P:flavonoid biosynthetic process"/>
    <property type="evidence" value="ECO:0007669"/>
    <property type="project" value="UniProtKB-UniPathway"/>
</dbReference>
<dbReference type="GO" id="GO:0030639">
    <property type="term" value="P:polyketide biosynthetic process"/>
    <property type="evidence" value="ECO:0007669"/>
    <property type="project" value="TreeGrafter"/>
</dbReference>
<dbReference type="CDD" id="cd00831">
    <property type="entry name" value="CHS_like"/>
    <property type="match status" value="1"/>
</dbReference>
<dbReference type="FunFam" id="3.40.47.10:FF:000014">
    <property type="entry name" value="Chalcone synthase 1"/>
    <property type="match status" value="1"/>
</dbReference>
<dbReference type="FunFam" id="3.40.47.10:FF:000025">
    <property type="entry name" value="Chalcone synthase 2"/>
    <property type="match status" value="1"/>
</dbReference>
<dbReference type="Gene3D" id="3.40.47.10">
    <property type="match status" value="2"/>
</dbReference>
<dbReference type="InterPro" id="IPR012328">
    <property type="entry name" value="Chalcone/stilbene_synt_C"/>
</dbReference>
<dbReference type="InterPro" id="IPR001099">
    <property type="entry name" value="Chalcone/stilbene_synt_N"/>
</dbReference>
<dbReference type="InterPro" id="IPR018088">
    <property type="entry name" value="Chalcone/stilbene_synthase_AS"/>
</dbReference>
<dbReference type="InterPro" id="IPR011141">
    <property type="entry name" value="Polyketide_synthase_type-III"/>
</dbReference>
<dbReference type="InterPro" id="IPR016039">
    <property type="entry name" value="Thiolase-like"/>
</dbReference>
<dbReference type="PANTHER" id="PTHR11877:SF80">
    <property type="entry name" value="CHALCONE SYNTHASE 1"/>
    <property type="match status" value="1"/>
</dbReference>
<dbReference type="PANTHER" id="PTHR11877">
    <property type="entry name" value="HYDROXYMETHYLGLUTARYL-COA SYNTHASE"/>
    <property type="match status" value="1"/>
</dbReference>
<dbReference type="Pfam" id="PF02797">
    <property type="entry name" value="Chal_sti_synt_C"/>
    <property type="match status" value="1"/>
</dbReference>
<dbReference type="Pfam" id="PF00195">
    <property type="entry name" value="Chal_sti_synt_N"/>
    <property type="match status" value="1"/>
</dbReference>
<dbReference type="PIRSF" id="PIRSF000451">
    <property type="entry name" value="PKS_III"/>
    <property type="match status" value="1"/>
</dbReference>
<dbReference type="SUPFAM" id="SSF53901">
    <property type="entry name" value="Thiolase-like"/>
    <property type="match status" value="2"/>
</dbReference>
<dbReference type="PROSITE" id="PS00441">
    <property type="entry name" value="CHALCONE_SYNTH"/>
    <property type="match status" value="1"/>
</dbReference>
<name>CHSY_ANTMA</name>
<sequence length="390" mass="42636">MVTVEEVRRAQRAEGPATVLAIGTATPANCVDQSTYPDYYFRITNSEHMTELKEKFKRMCDKSNIKRRYMHLTEEILKENPAMCEYMAPSLDARQDIVVVEVPRLGKEAAQKAIKEWGQPKSKITHLVFCTTSGVDMPGADYQLTKLLGLRPSVKRFMMYQQGCFAGGTVLRMAKDLAENNAGARVLVVCSEITAVTFRGPADTHLDSLVGQALFGDGAAAVIVGSDPVVGVERPLFQIVTAAQTLLPDSHGAIDGHLREVGLTFHLLKDVPGLISKNIEKSLKEAFDPLGISDWNSVFWIAHPGGPAILDQVEEKLGLKPEKLRSTRQVLSEYGNMSSACVLFILDEMRKSSAKEGMSTTGEGLDWGVLFGFGPGLTVETVVLHSVPLN</sequence>